<feature type="chain" id="PRO_0000166057" description="Nitrate reductase [NADH]">
    <location>
        <begin position="1" status="less than"/>
        <end position="912"/>
    </location>
</feature>
<feature type="domain" description="Cytochrome b5 heme-binding" evidence="6">
    <location>
        <begin position="535"/>
        <end position="610"/>
    </location>
</feature>
<feature type="domain" description="FAD-binding FR-type" evidence="7">
    <location>
        <begin position="651"/>
        <end position="764"/>
    </location>
</feature>
<feature type="region of interest" description="Disordered" evidence="8">
    <location>
        <begin position="1"/>
        <end position="99"/>
    </location>
</feature>
<feature type="compositionally biased region" description="Low complexity" evidence="8">
    <location>
        <begin position="13"/>
        <end position="23"/>
    </location>
</feature>
<feature type="compositionally biased region" description="Acidic residues" evidence="8">
    <location>
        <begin position="54"/>
        <end position="68"/>
    </location>
</feature>
<feature type="compositionally biased region" description="Basic and acidic residues" evidence="8">
    <location>
        <begin position="85"/>
        <end position="94"/>
    </location>
</feature>
<feature type="binding site" evidence="4">
    <location>
        <position position="186"/>
    </location>
    <ligand>
        <name>Mo-molybdopterin</name>
        <dbReference type="ChEBI" id="CHEBI:71302"/>
    </ligand>
    <ligandPart>
        <name>Mo</name>
        <dbReference type="ChEBI" id="CHEBI:28685"/>
    </ligandPart>
</feature>
<feature type="binding site" description="axial binding residue" evidence="6">
    <location>
        <position position="570"/>
    </location>
    <ligand>
        <name>heme</name>
        <dbReference type="ChEBI" id="CHEBI:30413"/>
    </ligand>
    <ligandPart>
        <name>Fe</name>
        <dbReference type="ChEBI" id="CHEBI:18248"/>
    </ligandPart>
</feature>
<feature type="binding site" description="axial binding residue" evidence="6">
    <location>
        <position position="593"/>
    </location>
    <ligand>
        <name>heme</name>
        <dbReference type="ChEBI" id="CHEBI:30413"/>
    </ligand>
    <ligandPart>
        <name>Fe</name>
        <dbReference type="ChEBI" id="CHEBI:18248"/>
    </ligandPart>
</feature>
<feature type="binding site" evidence="2">
    <location>
        <begin position="703"/>
        <end position="706"/>
    </location>
    <ligand>
        <name>FAD</name>
        <dbReference type="ChEBI" id="CHEBI:57692"/>
    </ligand>
</feature>
<feature type="binding site" evidence="2">
    <location>
        <begin position="720"/>
        <end position="724"/>
    </location>
    <ligand>
        <name>FAD</name>
        <dbReference type="ChEBI" id="CHEBI:57692"/>
    </ligand>
</feature>
<feature type="binding site" evidence="3">
    <location>
        <position position="725"/>
    </location>
    <ligand>
        <name>FAD</name>
        <dbReference type="ChEBI" id="CHEBI:57692"/>
    </ligand>
</feature>
<feature type="binding site" evidence="2">
    <location>
        <position position="732"/>
    </location>
    <ligand>
        <name>FAD</name>
        <dbReference type="ChEBI" id="CHEBI:57692"/>
    </ligand>
</feature>
<feature type="binding site" evidence="2">
    <location>
        <begin position="737"/>
        <end position="739"/>
    </location>
    <ligand>
        <name>FAD</name>
        <dbReference type="ChEBI" id="CHEBI:57692"/>
    </ligand>
</feature>
<feature type="binding site" evidence="3">
    <location>
        <position position="788"/>
    </location>
    <ligand>
        <name>FAD</name>
        <dbReference type="ChEBI" id="CHEBI:57692"/>
    </ligand>
</feature>
<feature type="binding site" evidence="2">
    <location>
        <position position="791"/>
    </location>
    <ligand>
        <name>FAD</name>
        <dbReference type="ChEBI" id="CHEBI:57692"/>
    </ligand>
</feature>
<feature type="disulfide bond" description="Interchain" evidence="5">
    <location>
        <position position="425"/>
    </location>
</feature>
<feature type="non-terminal residue">
    <location>
        <position position="1"/>
    </location>
</feature>
<proteinExistence type="evidence at transcript level"/>
<protein>
    <recommendedName>
        <fullName>Nitrate reductase [NADH]</fullName>
        <shortName>NR</shortName>
        <ecNumber>1.7.1.1</ecNumber>
    </recommendedName>
</protein>
<name>NIA2_HORVU</name>
<organism>
    <name type="scientific">Hordeum vulgare</name>
    <name type="common">Barley</name>
    <dbReference type="NCBI Taxonomy" id="4513"/>
    <lineage>
        <taxon>Eukaryota</taxon>
        <taxon>Viridiplantae</taxon>
        <taxon>Streptophyta</taxon>
        <taxon>Embryophyta</taxon>
        <taxon>Tracheophyta</taxon>
        <taxon>Spermatophyta</taxon>
        <taxon>Magnoliopsida</taxon>
        <taxon>Liliopsida</taxon>
        <taxon>Poales</taxon>
        <taxon>Poaceae</taxon>
        <taxon>BOP clade</taxon>
        <taxon>Pooideae</taxon>
        <taxon>Triticodae</taxon>
        <taxon>Triticeae</taxon>
        <taxon>Hordeinae</taxon>
        <taxon>Hordeum</taxon>
    </lineage>
</organism>
<keyword id="KW-1015">Disulfide bond</keyword>
<keyword id="KW-0274">FAD</keyword>
<keyword id="KW-0285">Flavoprotein</keyword>
<keyword id="KW-0349">Heme</keyword>
<keyword id="KW-0408">Iron</keyword>
<keyword id="KW-0479">Metal-binding</keyword>
<keyword id="KW-0500">Molybdenum</keyword>
<keyword id="KW-0520">NAD</keyword>
<keyword id="KW-0534">Nitrate assimilation</keyword>
<keyword id="KW-0560">Oxidoreductase</keyword>
<accession>P27969</accession>
<reference key="1">
    <citation type="journal article" date="1991" name="Mol. Gen. Genet.">
        <title>Analysis of barley nitrate reductase cDNA and genomic clones.</title>
        <authorList>
            <person name="Schnorr K.M."/>
            <person name="Juricek M."/>
            <person name="Huang C."/>
            <person name="Culley D."/>
            <person name="Kleinhofs A."/>
        </authorList>
    </citation>
    <scope>NUCLEOTIDE SEQUENCE [MRNA]</scope>
    <source>
        <strain>cv. Steptoe</strain>
        <tissue>Leaf</tissue>
    </source>
</reference>
<evidence type="ECO:0000250" key="1"/>
<evidence type="ECO:0000250" key="2">
    <source>
        <dbReference type="UniProtKB" id="A0A286R227"/>
    </source>
</evidence>
<evidence type="ECO:0000250" key="3">
    <source>
        <dbReference type="UniProtKB" id="P17571"/>
    </source>
</evidence>
<evidence type="ECO:0000250" key="4">
    <source>
        <dbReference type="UniProtKB" id="P49050"/>
    </source>
</evidence>
<evidence type="ECO:0000255" key="5"/>
<evidence type="ECO:0000255" key="6">
    <source>
        <dbReference type="PROSITE-ProRule" id="PRU00279"/>
    </source>
</evidence>
<evidence type="ECO:0000255" key="7">
    <source>
        <dbReference type="PROSITE-ProRule" id="PRU00716"/>
    </source>
</evidence>
<evidence type="ECO:0000256" key="8">
    <source>
        <dbReference type="SAM" id="MobiDB-lite"/>
    </source>
</evidence>
<evidence type="ECO:0000305" key="9"/>
<comment type="function">
    <text>Nitrate reductase is a key enzyme involved in the first step of nitrate assimilation in plants, fungi and bacteria.</text>
</comment>
<comment type="catalytic activity">
    <reaction>
        <text>nitrite + NAD(+) + H2O = nitrate + NADH + H(+)</text>
        <dbReference type="Rhea" id="RHEA:17913"/>
        <dbReference type="ChEBI" id="CHEBI:15377"/>
        <dbReference type="ChEBI" id="CHEBI:15378"/>
        <dbReference type="ChEBI" id="CHEBI:16301"/>
        <dbReference type="ChEBI" id="CHEBI:17632"/>
        <dbReference type="ChEBI" id="CHEBI:57540"/>
        <dbReference type="ChEBI" id="CHEBI:57945"/>
        <dbReference type="EC" id="1.7.1.1"/>
    </reaction>
</comment>
<comment type="cofactor">
    <cofactor evidence="1">
        <name>FAD</name>
        <dbReference type="ChEBI" id="CHEBI:57692"/>
    </cofactor>
    <text evidence="1">Binds 1 FAD per subunit.</text>
</comment>
<comment type="cofactor">
    <cofactor evidence="1">
        <name>heme</name>
        <dbReference type="ChEBI" id="CHEBI:30413"/>
    </cofactor>
    <text evidence="1">Binds 1 heme group per subunit.</text>
</comment>
<comment type="cofactor">
    <cofactor evidence="1">
        <name>Mo-molybdopterin</name>
        <dbReference type="ChEBI" id="CHEBI:71302"/>
    </cofactor>
    <text evidence="1">Binds 1 Mo-molybdopterin (Mo-MPT) cofactor per subunit.</text>
</comment>
<comment type="subunit">
    <text>Homodimer.</text>
</comment>
<comment type="similarity">
    <text evidence="9">Belongs to the nitrate reductase family.</text>
</comment>
<sequence length="912" mass="101467">SVEPRQPFGRLDAPATAPTARAPGSNGIRRRADSPVRGCGFPSLISPPRKGPVAEEDEEDDDEDDEGHEDWREAYGSHLQLEVEPSTRDPRDEGTADAWIERNPSLIRLTGKHPLNCEPPLARLMHHGFITPAPLHYVRNHGAVPRGDWATWTVEVTGLVRRPARLTMDELANGFPAAEVPATLVCAGNRRKEQNMVQQTVGFNWGAAGVSTSVWRGARLRDVLLRCGVMSKKGQALNVCFEGAEDLPGGGGSKYGTSMSREWAMDPSRDIILPYAQNGEPLLPDHGYPVRVLIPGCIGGRMVKWVRRIVVTTAESDNYYHFKDNRVLPSHVDAELANAEAWWYRPEYIINELNTNSVITTPGHDEILPINAFTTQRAYTIKGYAYSGGGKKITRVEVTLDGGESWMLCTLDIPEKPNKYGRYWCWCFWSVEIEVLDLLGAKEVAVRAWDQTHNTQPEKLIWNLMGMMNNCWFKIKVNVCRPHKGEIGLVFEHPTQPGNQTGGWMARQKHLETAEAAAPGLKRSTSTPFMNTAGDKQFTMSEVRKHGSKESAWIVVHGHVYDCTAFLKDHPGGADSILINAGSDCTEEFDAIHSDKAKALLDTYRIGELITTGTGYNSDNSVHGGSSLSHLAPIREATKVAGAPIALSSPREKVPCRLVDKKELSHDVRLFRFALPSSDQVLGLPVGKHIFVCATIDGKLCMRAYTPTSMVDEIGQFELLVKVYFRDEHPKFPNGGLMTQYLESLQVGSSSIDVKGPLGHVEYTGRGNFVINGKQRRARRLAMICGSSGITPMYQVIQAVLRDQPEDETEMHLVYANRSEDDILLRDELDRWATEYPDRLKVWYVIDQVKRPEDGWKFSVGFVTEDILRAHVPEGGDDTLALACGPPPMIKFAISPNLEKMKYDMANSFISF</sequence>
<dbReference type="EC" id="1.7.1.1"/>
<dbReference type="EMBL" id="X57844">
    <property type="protein sequence ID" value="CAA40975.1"/>
    <property type="molecule type" value="mRNA"/>
</dbReference>
<dbReference type="PIR" id="S17454">
    <property type="entry name" value="RDBHNS"/>
</dbReference>
<dbReference type="SMR" id="P27969"/>
<dbReference type="ExpressionAtlas" id="P27969">
    <property type="expression patterns" value="baseline and differential"/>
</dbReference>
<dbReference type="GO" id="GO:0031090">
    <property type="term" value="C:organelle membrane"/>
    <property type="evidence" value="ECO:0007669"/>
    <property type="project" value="UniProtKB-ARBA"/>
</dbReference>
<dbReference type="GO" id="GO:0071949">
    <property type="term" value="F:FAD binding"/>
    <property type="evidence" value="ECO:0000250"/>
    <property type="project" value="UniProtKB"/>
</dbReference>
<dbReference type="GO" id="GO:0020037">
    <property type="term" value="F:heme binding"/>
    <property type="evidence" value="ECO:0007669"/>
    <property type="project" value="InterPro"/>
</dbReference>
<dbReference type="GO" id="GO:0030151">
    <property type="term" value="F:molybdenum ion binding"/>
    <property type="evidence" value="ECO:0000250"/>
    <property type="project" value="UniProtKB"/>
</dbReference>
<dbReference type="GO" id="GO:0043546">
    <property type="term" value="F:molybdopterin cofactor binding"/>
    <property type="evidence" value="ECO:0007669"/>
    <property type="project" value="InterPro"/>
</dbReference>
<dbReference type="GO" id="GO:0009703">
    <property type="term" value="F:nitrate reductase (NADH) activity"/>
    <property type="evidence" value="ECO:0007669"/>
    <property type="project" value="UniProtKB-EC"/>
</dbReference>
<dbReference type="GO" id="GO:0050464">
    <property type="term" value="F:nitrate reductase (NADPH) activity"/>
    <property type="evidence" value="ECO:0007669"/>
    <property type="project" value="InterPro"/>
</dbReference>
<dbReference type="GO" id="GO:0008482">
    <property type="term" value="F:sulfite oxidase activity"/>
    <property type="evidence" value="ECO:0007669"/>
    <property type="project" value="TreeGrafter"/>
</dbReference>
<dbReference type="GO" id="GO:0042128">
    <property type="term" value="P:nitrate assimilation"/>
    <property type="evidence" value="ECO:0007669"/>
    <property type="project" value="UniProtKB-KW"/>
</dbReference>
<dbReference type="GO" id="GO:0006809">
    <property type="term" value="P:nitric oxide biosynthetic process"/>
    <property type="evidence" value="ECO:0007669"/>
    <property type="project" value="InterPro"/>
</dbReference>
<dbReference type="GO" id="GO:0006790">
    <property type="term" value="P:sulfur compound metabolic process"/>
    <property type="evidence" value="ECO:0007669"/>
    <property type="project" value="TreeGrafter"/>
</dbReference>
<dbReference type="CDD" id="cd06183">
    <property type="entry name" value="cyt_b5_reduct_like"/>
    <property type="match status" value="1"/>
</dbReference>
<dbReference type="CDD" id="cd02112">
    <property type="entry name" value="eukary_NR_Moco"/>
    <property type="match status" value="1"/>
</dbReference>
<dbReference type="FunFam" id="2.40.30.10:FF:000021">
    <property type="entry name" value="NADH-cytochrome b5 reductase"/>
    <property type="match status" value="1"/>
</dbReference>
<dbReference type="FunFam" id="2.60.40.650:FF:000001">
    <property type="entry name" value="Nitrate reductase"/>
    <property type="match status" value="1"/>
</dbReference>
<dbReference type="FunFam" id="3.10.120.10:FF:000008">
    <property type="entry name" value="Nitrate reductase"/>
    <property type="match status" value="1"/>
</dbReference>
<dbReference type="FunFam" id="3.90.420.10:FF:000003">
    <property type="entry name" value="Nitrate reductase"/>
    <property type="match status" value="1"/>
</dbReference>
<dbReference type="FunFam" id="3.40.50.80:FF:000025">
    <property type="entry name" value="Nitrate reductase [NADH]"/>
    <property type="match status" value="1"/>
</dbReference>
<dbReference type="Gene3D" id="2.60.40.650">
    <property type="match status" value="1"/>
</dbReference>
<dbReference type="Gene3D" id="3.10.120.10">
    <property type="entry name" value="Cytochrome b5-like heme/steroid binding domain"/>
    <property type="match status" value="1"/>
</dbReference>
<dbReference type="Gene3D" id="3.40.50.80">
    <property type="entry name" value="Nucleotide-binding domain of ferredoxin-NADP reductase (FNR) module"/>
    <property type="match status" value="1"/>
</dbReference>
<dbReference type="Gene3D" id="3.90.420.10">
    <property type="entry name" value="Oxidoreductase, molybdopterin-binding domain"/>
    <property type="match status" value="1"/>
</dbReference>
<dbReference type="Gene3D" id="2.40.30.10">
    <property type="entry name" value="Translation factors"/>
    <property type="match status" value="1"/>
</dbReference>
<dbReference type="InterPro" id="IPR008333">
    <property type="entry name" value="Cbr1-like_FAD-bd_dom"/>
</dbReference>
<dbReference type="InterPro" id="IPR001199">
    <property type="entry name" value="Cyt_B5-like_heme/steroid-bd"/>
</dbReference>
<dbReference type="InterPro" id="IPR036400">
    <property type="entry name" value="Cyt_B5-like_heme/steroid_sf"/>
</dbReference>
<dbReference type="InterPro" id="IPR018506">
    <property type="entry name" value="Cyt_B5_heme-BS"/>
</dbReference>
<dbReference type="InterPro" id="IPR017927">
    <property type="entry name" value="FAD-bd_FR_type"/>
</dbReference>
<dbReference type="InterPro" id="IPR001709">
    <property type="entry name" value="Flavoprot_Pyr_Nucl_cyt_Rdtase"/>
</dbReference>
<dbReference type="InterPro" id="IPR039261">
    <property type="entry name" value="FNR_nucleotide-bd"/>
</dbReference>
<dbReference type="InterPro" id="IPR014756">
    <property type="entry name" value="Ig_E-set"/>
</dbReference>
<dbReference type="InterPro" id="IPR005066">
    <property type="entry name" value="MoCF_OxRdtse_dimer"/>
</dbReference>
<dbReference type="InterPro" id="IPR008335">
    <property type="entry name" value="Mopterin_OxRdtase_euk"/>
</dbReference>
<dbReference type="InterPro" id="IPR012137">
    <property type="entry name" value="Nitr_rd_NADH"/>
</dbReference>
<dbReference type="InterPro" id="IPR001433">
    <property type="entry name" value="OxRdtase_FAD/NAD-bd"/>
</dbReference>
<dbReference type="InterPro" id="IPR000572">
    <property type="entry name" value="OxRdtase_Mopterin-bd_dom"/>
</dbReference>
<dbReference type="InterPro" id="IPR036374">
    <property type="entry name" value="OxRdtase_Mopterin-bd_sf"/>
</dbReference>
<dbReference type="InterPro" id="IPR022407">
    <property type="entry name" value="OxRdtase_Mopterin_BS"/>
</dbReference>
<dbReference type="InterPro" id="IPR017938">
    <property type="entry name" value="Riboflavin_synthase-like_b-brl"/>
</dbReference>
<dbReference type="PANTHER" id="PTHR19372:SF16">
    <property type="entry name" value="NITRATE REDUCTASE"/>
    <property type="match status" value="1"/>
</dbReference>
<dbReference type="PANTHER" id="PTHR19372">
    <property type="entry name" value="SULFITE REDUCTASE"/>
    <property type="match status" value="1"/>
</dbReference>
<dbReference type="Pfam" id="PF00173">
    <property type="entry name" value="Cyt-b5"/>
    <property type="match status" value="1"/>
</dbReference>
<dbReference type="Pfam" id="PF00970">
    <property type="entry name" value="FAD_binding_6"/>
    <property type="match status" value="1"/>
</dbReference>
<dbReference type="Pfam" id="PF03404">
    <property type="entry name" value="Mo-co_dimer"/>
    <property type="match status" value="1"/>
</dbReference>
<dbReference type="Pfam" id="PF00175">
    <property type="entry name" value="NAD_binding_1"/>
    <property type="match status" value="1"/>
</dbReference>
<dbReference type="Pfam" id="PF00174">
    <property type="entry name" value="Oxidored_molyb"/>
    <property type="match status" value="1"/>
</dbReference>
<dbReference type="PIRSF" id="PIRSF000233">
    <property type="entry name" value="Nitr_rd_NADH"/>
    <property type="match status" value="1"/>
</dbReference>
<dbReference type="PRINTS" id="PR00406">
    <property type="entry name" value="CYTB5RDTASE"/>
</dbReference>
<dbReference type="PRINTS" id="PR00363">
    <property type="entry name" value="CYTOCHROMEB5"/>
</dbReference>
<dbReference type="PRINTS" id="PR00407">
    <property type="entry name" value="EUMOPTERIN"/>
</dbReference>
<dbReference type="PRINTS" id="PR00371">
    <property type="entry name" value="FPNCR"/>
</dbReference>
<dbReference type="SMART" id="SM01117">
    <property type="entry name" value="Cyt-b5"/>
    <property type="match status" value="1"/>
</dbReference>
<dbReference type="SUPFAM" id="SSF55856">
    <property type="entry name" value="Cytochrome b5-like heme/steroid binding domain"/>
    <property type="match status" value="1"/>
</dbReference>
<dbReference type="SUPFAM" id="SSF81296">
    <property type="entry name" value="E set domains"/>
    <property type="match status" value="1"/>
</dbReference>
<dbReference type="SUPFAM" id="SSF52343">
    <property type="entry name" value="Ferredoxin reductase-like, C-terminal NADP-linked domain"/>
    <property type="match status" value="1"/>
</dbReference>
<dbReference type="SUPFAM" id="SSF56524">
    <property type="entry name" value="Oxidoreductase molybdopterin-binding domain"/>
    <property type="match status" value="1"/>
</dbReference>
<dbReference type="SUPFAM" id="SSF63380">
    <property type="entry name" value="Riboflavin synthase domain-like"/>
    <property type="match status" value="1"/>
</dbReference>
<dbReference type="PROSITE" id="PS00191">
    <property type="entry name" value="CYTOCHROME_B5_1"/>
    <property type="match status" value="1"/>
</dbReference>
<dbReference type="PROSITE" id="PS50255">
    <property type="entry name" value="CYTOCHROME_B5_2"/>
    <property type="match status" value="1"/>
</dbReference>
<dbReference type="PROSITE" id="PS51384">
    <property type="entry name" value="FAD_FR"/>
    <property type="match status" value="1"/>
</dbReference>
<dbReference type="PROSITE" id="PS00559">
    <property type="entry name" value="MOLYBDOPTERIN_EUK"/>
    <property type="match status" value="1"/>
</dbReference>